<sequence length="273" mass="32082">MHVPGTRAKMSSIFAYQSSEVDWCESNFQHSELVAEFYNTFSNVFFLIFGPLMMFLMHPYAQKRTRCFYGVSVLFMLIGLFSMYFHMTLSFLGQLLDEISILWLLASGYSVWLPRCYFPKFVKGNRFYFSCLVTITTIISTFLTFVKPTVNAYALNSIAIHILYIVRTEYKKIRDDDLRHLIAVSVVLWAAALTSWISDRVLCSFWQRIHFYYLHSIWHVLISITFPYGIVTMALVDAKYEMPDKTLKVHYWPRDSWVIGLPYVEIQENDKNC</sequence>
<proteinExistence type="evidence at protein level"/>
<accession>Q8R4X1</accession>
<accession>A1L3S2</accession>
<feature type="chain" id="PRO_0000247746" description="Alkaline ceramidase 1">
    <location>
        <begin position="1"/>
        <end position="273"/>
    </location>
</feature>
<feature type="topological domain" description="Lumenal" evidence="3">
    <location>
        <begin position="1"/>
        <end position="36"/>
    </location>
</feature>
<feature type="transmembrane region" description="Helical" evidence="3">
    <location>
        <begin position="37"/>
        <end position="57"/>
    </location>
</feature>
<feature type="topological domain" description="Cytoplasmic" evidence="3">
    <location>
        <begin position="58"/>
        <end position="72"/>
    </location>
</feature>
<feature type="transmembrane region" description="Helical" evidence="3">
    <location>
        <begin position="73"/>
        <end position="93"/>
    </location>
</feature>
<feature type="transmembrane region" description="Helical" evidence="3">
    <location>
        <begin position="94"/>
        <end position="114"/>
    </location>
</feature>
<feature type="topological domain" description="Cytoplasmic" evidence="3">
    <location>
        <begin position="115"/>
        <end position="126"/>
    </location>
</feature>
<feature type="transmembrane region" description="Helical" evidence="3">
    <location>
        <begin position="127"/>
        <end position="147"/>
    </location>
</feature>
<feature type="topological domain" description="Lumenal" evidence="3">
    <location>
        <begin position="148"/>
        <end position="149"/>
    </location>
</feature>
<feature type="transmembrane region" description="Helical" evidence="3">
    <location>
        <begin position="150"/>
        <end position="167"/>
    </location>
</feature>
<feature type="topological domain" description="Cytoplasmic" evidence="3">
    <location>
        <begin position="168"/>
        <end position="177"/>
    </location>
</feature>
<feature type="transmembrane region" description="Helical" evidence="3">
    <location>
        <begin position="178"/>
        <end position="198"/>
    </location>
</feature>
<feature type="topological domain" description="Lumenal" evidence="3">
    <location>
        <begin position="199"/>
        <end position="215"/>
    </location>
</feature>
<feature type="transmembrane region" description="Helical" evidence="3">
    <location>
        <begin position="216"/>
        <end position="236"/>
    </location>
</feature>
<feature type="topological domain" description="Cytoplasmic" evidence="3">
    <location>
        <begin position="237"/>
        <end position="273"/>
    </location>
</feature>
<feature type="binding site" evidence="2">
    <location>
        <position position="22"/>
    </location>
    <ligand>
        <name>Ca(2+)</name>
        <dbReference type="ChEBI" id="CHEBI:29108"/>
    </ligand>
</feature>
<feature type="binding site" evidence="2">
    <location>
        <position position="23"/>
    </location>
    <ligand>
        <name>Ca(2+)</name>
        <dbReference type="ChEBI" id="CHEBI:29108"/>
    </ligand>
</feature>
<feature type="binding site" evidence="2">
    <location>
        <position position="25"/>
    </location>
    <ligand>
        <name>Ca(2+)</name>
        <dbReference type="ChEBI" id="CHEBI:29108"/>
    </ligand>
</feature>
<feature type="binding site" evidence="2">
    <location>
        <position position="27"/>
    </location>
    <ligand>
        <name>Ca(2+)</name>
        <dbReference type="ChEBI" id="CHEBI:29108"/>
    </ligand>
</feature>
<feature type="binding site" evidence="2">
    <location>
        <position position="36"/>
    </location>
    <ligand>
        <name>Ca(2+)</name>
        <dbReference type="ChEBI" id="CHEBI:29108"/>
    </ligand>
</feature>
<feature type="binding site" evidence="2">
    <location>
        <position position="86"/>
    </location>
    <ligand>
        <name>Zn(2+)</name>
        <dbReference type="ChEBI" id="CHEBI:29105"/>
        <note>catalytic</note>
    </ligand>
</feature>
<feature type="binding site" evidence="2">
    <location>
        <position position="215"/>
    </location>
    <ligand>
        <name>Zn(2+)</name>
        <dbReference type="ChEBI" id="CHEBI:29105"/>
        <note>catalytic</note>
    </ligand>
</feature>
<feature type="binding site" evidence="2">
    <location>
        <position position="219"/>
    </location>
    <ligand>
        <name>Zn(2+)</name>
        <dbReference type="ChEBI" id="CHEBI:29105"/>
        <note>catalytic</note>
    </ligand>
</feature>
<name>ACER1_MOUSE</name>
<protein>
    <recommendedName>
        <fullName evidence="8">Alkaline ceramidase 1</fullName>
        <shortName>AlkCDase 1</shortName>
        <shortName>Alkaline CDase 1</shortName>
        <shortName>maCER1</shortName>
        <ecNumber evidence="1">3.5.1.-</ecNumber>
        <ecNumber evidence="4 5 6">3.5.1.23</ecNumber>
    </recommendedName>
    <alternativeName>
        <fullName>Acylsphingosine deacylase 3</fullName>
    </alternativeName>
    <alternativeName>
        <fullName>N-acylsphingosine amidohydrolase 3</fullName>
    </alternativeName>
</protein>
<organism>
    <name type="scientific">Mus musculus</name>
    <name type="common">Mouse</name>
    <dbReference type="NCBI Taxonomy" id="10090"/>
    <lineage>
        <taxon>Eukaryota</taxon>
        <taxon>Metazoa</taxon>
        <taxon>Chordata</taxon>
        <taxon>Craniata</taxon>
        <taxon>Vertebrata</taxon>
        <taxon>Euteleostomi</taxon>
        <taxon>Mammalia</taxon>
        <taxon>Eutheria</taxon>
        <taxon>Euarchontoglires</taxon>
        <taxon>Glires</taxon>
        <taxon>Rodentia</taxon>
        <taxon>Myomorpha</taxon>
        <taxon>Muroidea</taxon>
        <taxon>Muridae</taxon>
        <taxon>Murinae</taxon>
        <taxon>Mus</taxon>
        <taxon>Mus</taxon>
    </lineage>
</organism>
<keyword id="KW-0106">Calcium</keyword>
<keyword id="KW-0256">Endoplasmic reticulum</keyword>
<keyword id="KW-0378">Hydrolase</keyword>
<keyword id="KW-0443">Lipid metabolism</keyword>
<keyword id="KW-0472">Membrane</keyword>
<keyword id="KW-0479">Metal-binding</keyword>
<keyword id="KW-1185">Reference proteome</keyword>
<keyword id="KW-0746">Sphingolipid metabolism</keyword>
<keyword id="KW-0812">Transmembrane</keyword>
<keyword id="KW-1133">Transmembrane helix</keyword>
<keyword id="KW-0862">Zinc</keyword>
<evidence type="ECO:0000250" key="1">
    <source>
        <dbReference type="UniProtKB" id="Q8TDN7"/>
    </source>
</evidence>
<evidence type="ECO:0000250" key="2">
    <source>
        <dbReference type="UniProtKB" id="Q9NUN7"/>
    </source>
</evidence>
<evidence type="ECO:0000255" key="3"/>
<evidence type="ECO:0000269" key="4">
    <source>
    </source>
</evidence>
<evidence type="ECO:0000269" key="5">
    <source>
    </source>
</evidence>
<evidence type="ECO:0000269" key="6">
    <source>
    </source>
</evidence>
<evidence type="ECO:0000303" key="7">
    <source>
    </source>
</evidence>
<evidence type="ECO:0000305" key="8"/>
<evidence type="ECO:0000312" key="9">
    <source>
        <dbReference type="MGI" id="MGI:2181962"/>
    </source>
</evidence>
<gene>
    <name evidence="9" type="primary">Acer1</name>
    <name type="synonym">Asah3</name>
</gene>
<comment type="function">
    <text evidence="1 4 5 6 7">Endoplasmic reticulum ceramidase that catalyzes the hydrolysis of ceramides into sphingosine and free fatty acids at alkaline pH (PubMed:12783875). Ceramides, sphingosine, and its phosphorylated form sphingosine-1-phosphate are bioactive lipids that mediate cellular signaling pathways regulating several biological processes including cell proliferation, apoptosis and differentiation (PubMed:12783875). Exhibits a strong substrate specificity towards the natural stereoisomer of ceramides with D-erythro-sphingosine as a backbone and has a higher activity towards very long-chain unsaturated fatty acids like the C24:1-ceramide (PubMed:12783875). May also hydrolyze dihydroceramides to produce dihydrosphingosine (By similarity). ACER1 is a skin-specific ceramidase that regulates the levels of ceramides, sphingosine and sphingosine-1-phosphate in the epidermis, mediates the calcium-induced differentiation of epidermal keratinocytes and more generally plays an important role in skin homeostasis (PubMed:27126290, PubMed:29056331).</text>
</comment>
<comment type="catalytic activity">
    <reaction evidence="4 5">
        <text>an N-acylsphing-4-enine + H2O = sphing-4-enine + a fatty acid</text>
        <dbReference type="Rhea" id="RHEA:20856"/>
        <dbReference type="ChEBI" id="CHEBI:15377"/>
        <dbReference type="ChEBI" id="CHEBI:28868"/>
        <dbReference type="ChEBI" id="CHEBI:52639"/>
        <dbReference type="ChEBI" id="CHEBI:57756"/>
        <dbReference type="EC" id="3.5.1.23"/>
    </reaction>
    <physiologicalReaction direction="left-to-right" evidence="5">
        <dbReference type="Rhea" id="RHEA:20857"/>
    </physiologicalReaction>
</comment>
<comment type="catalytic activity">
    <reaction evidence="1">
        <text>N-tetracosanoyl-sphing-4-enine + H2O = tetracosanoate + sphing-4-enine</text>
        <dbReference type="Rhea" id="RHEA:41283"/>
        <dbReference type="ChEBI" id="CHEBI:15377"/>
        <dbReference type="ChEBI" id="CHEBI:31014"/>
        <dbReference type="ChEBI" id="CHEBI:57756"/>
        <dbReference type="ChEBI" id="CHEBI:72965"/>
    </reaction>
    <physiologicalReaction direction="left-to-right" evidence="1">
        <dbReference type="Rhea" id="RHEA:41284"/>
    </physiologicalReaction>
</comment>
<comment type="catalytic activity">
    <reaction evidence="1">
        <text>an N-acylsphinganine + H2O = sphinganine + a fatty acid</text>
        <dbReference type="Rhea" id="RHEA:33551"/>
        <dbReference type="ChEBI" id="CHEBI:15377"/>
        <dbReference type="ChEBI" id="CHEBI:28868"/>
        <dbReference type="ChEBI" id="CHEBI:31488"/>
        <dbReference type="ChEBI" id="CHEBI:57817"/>
    </reaction>
    <physiologicalReaction direction="left-to-right" evidence="1">
        <dbReference type="Rhea" id="RHEA:33552"/>
    </physiologicalReaction>
</comment>
<comment type="catalytic activity">
    <reaction evidence="6">
        <text>N-(9Z-octadecenoyl)-sphing-4-enine + H2O = sphing-4-enine + (9Z)-octadecenoate</text>
        <dbReference type="Rhea" id="RHEA:41299"/>
        <dbReference type="ChEBI" id="CHEBI:15377"/>
        <dbReference type="ChEBI" id="CHEBI:30823"/>
        <dbReference type="ChEBI" id="CHEBI:57756"/>
        <dbReference type="ChEBI" id="CHEBI:77996"/>
    </reaction>
    <physiologicalReaction direction="left-to-right" evidence="1">
        <dbReference type="Rhea" id="RHEA:41300"/>
    </physiologicalReaction>
</comment>
<comment type="catalytic activity">
    <reaction evidence="6">
        <text>N-(15Z-tetracosenoyl)-sphing-4-enine + H2O = (15Z)-tetracosenoate + sphing-4-enine</text>
        <dbReference type="Rhea" id="RHEA:41267"/>
        <dbReference type="ChEBI" id="CHEBI:15377"/>
        <dbReference type="ChEBI" id="CHEBI:32392"/>
        <dbReference type="ChEBI" id="CHEBI:57756"/>
        <dbReference type="ChEBI" id="CHEBI:74450"/>
    </reaction>
    <physiologicalReaction direction="left-to-right" evidence="1">
        <dbReference type="Rhea" id="RHEA:41268"/>
    </physiologicalReaction>
</comment>
<comment type="cofactor">
    <cofactor evidence="2">
        <name>Zn(2+)</name>
        <dbReference type="ChEBI" id="CHEBI:29105"/>
    </cofactor>
</comment>
<comment type="activity regulation">
    <text evidence="4">Inhibited by sphingosine (PubMed:12783875). Inhibited by Mn(2+), Zn(2+), and Cu(2+) in a dose-dependent manner (PubMed:12783875). Slightly activated by Ca(2+) in a dose-dependent manner (PubMed:12783875).</text>
</comment>
<comment type="biophysicochemical properties">
    <phDependence>
        <text evidence="4">Optimum pH is 8.0.</text>
    </phDependence>
</comment>
<comment type="pathway">
    <text evidence="4 5">Lipid metabolism; sphingolipid metabolism.</text>
</comment>
<comment type="subcellular location">
    <subcellularLocation>
        <location evidence="4">Endoplasmic reticulum membrane</location>
        <topology evidence="3">Multi-pass membrane protein</topology>
    </subcellularLocation>
</comment>
<comment type="tissue specificity">
    <text evidence="4 6">Highly expressed in skin. Weakly or not expressed in other tissues (PubMed:12783875). Expressed by granular layer of interfollicular epidermis, sebaceous glands and infundibulum (PubMed:29056331).</text>
</comment>
<comment type="disruption phenotype">
    <text evidence="5 6">Homozygous knockout mice are viable and fertile, with a normal lifespan but display several postnatal skin phenotypes (PubMed:27126290, PubMed:29056331). It includes an increase in total ceramide levels in the dorsal skin, tail epidermis and dermis (PubMed:27126290, PubMed:29056331). This is associated with hair shafts and sebaceous glands abnormalities, cyclic alopecia, a progressive loss of hair follicle stem cells, hyperproliferation, inflammation and abnormal differentiation of the epidermis and results in increased transepidermal water loss and reduction of fat content during aging (PubMed:27126290, PubMed:29056331).</text>
</comment>
<comment type="similarity">
    <text evidence="8">Belongs to the alkaline ceramidase family.</text>
</comment>
<reference key="1">
    <citation type="journal article" date="2003" name="J. Biol. Chem.">
        <title>Cloning and characterization of a mouse endoplasmic reticulum alkaline ceramidase: an enzyme that preferentially regulates metabolism of very long chain ceramides.</title>
        <authorList>
            <person name="Mao C."/>
            <person name="Xu R."/>
            <person name="Szulc Z.M."/>
            <person name="Bielawski J."/>
            <person name="Becker K.P."/>
            <person name="Bielawska A."/>
            <person name="Galadari S.H."/>
            <person name="Hu W."/>
            <person name="Obeid L.M."/>
        </authorList>
    </citation>
    <scope>NUCLEOTIDE SEQUENCE [MRNA]</scope>
    <scope>FUNCTION</scope>
    <scope>CATALYTIC ACTIVITY</scope>
    <scope>SUBSTRATE SPECIFICITY</scope>
    <scope>PATHWAY</scope>
    <scope>ACTIVITY REGULATION</scope>
    <scope>BIOPHYSICOCHEMICAL PROPERTIES</scope>
    <scope>SUBCELLULAR LOCATION</scope>
    <scope>TISSUE SPECIFICITY</scope>
</reference>
<reference key="2">
    <citation type="journal article" date="2005" name="Science">
        <title>The transcriptional landscape of the mammalian genome.</title>
        <authorList>
            <person name="Carninci P."/>
            <person name="Kasukawa T."/>
            <person name="Katayama S."/>
            <person name="Gough J."/>
            <person name="Frith M.C."/>
            <person name="Maeda N."/>
            <person name="Oyama R."/>
            <person name="Ravasi T."/>
            <person name="Lenhard B."/>
            <person name="Wells C."/>
            <person name="Kodzius R."/>
            <person name="Shimokawa K."/>
            <person name="Bajic V.B."/>
            <person name="Brenner S.E."/>
            <person name="Batalov S."/>
            <person name="Forrest A.R."/>
            <person name="Zavolan M."/>
            <person name="Davis M.J."/>
            <person name="Wilming L.G."/>
            <person name="Aidinis V."/>
            <person name="Allen J.E."/>
            <person name="Ambesi-Impiombato A."/>
            <person name="Apweiler R."/>
            <person name="Aturaliya R.N."/>
            <person name="Bailey T.L."/>
            <person name="Bansal M."/>
            <person name="Baxter L."/>
            <person name="Beisel K.W."/>
            <person name="Bersano T."/>
            <person name="Bono H."/>
            <person name="Chalk A.M."/>
            <person name="Chiu K.P."/>
            <person name="Choudhary V."/>
            <person name="Christoffels A."/>
            <person name="Clutterbuck D.R."/>
            <person name="Crowe M.L."/>
            <person name="Dalla E."/>
            <person name="Dalrymple B.P."/>
            <person name="de Bono B."/>
            <person name="Della Gatta G."/>
            <person name="di Bernardo D."/>
            <person name="Down T."/>
            <person name="Engstrom P."/>
            <person name="Fagiolini M."/>
            <person name="Faulkner G."/>
            <person name="Fletcher C.F."/>
            <person name="Fukushima T."/>
            <person name="Furuno M."/>
            <person name="Futaki S."/>
            <person name="Gariboldi M."/>
            <person name="Georgii-Hemming P."/>
            <person name="Gingeras T.R."/>
            <person name="Gojobori T."/>
            <person name="Green R.E."/>
            <person name="Gustincich S."/>
            <person name="Harbers M."/>
            <person name="Hayashi Y."/>
            <person name="Hensch T.K."/>
            <person name="Hirokawa N."/>
            <person name="Hill D."/>
            <person name="Huminiecki L."/>
            <person name="Iacono M."/>
            <person name="Ikeo K."/>
            <person name="Iwama A."/>
            <person name="Ishikawa T."/>
            <person name="Jakt M."/>
            <person name="Kanapin A."/>
            <person name="Katoh M."/>
            <person name="Kawasawa Y."/>
            <person name="Kelso J."/>
            <person name="Kitamura H."/>
            <person name="Kitano H."/>
            <person name="Kollias G."/>
            <person name="Krishnan S.P."/>
            <person name="Kruger A."/>
            <person name="Kummerfeld S.K."/>
            <person name="Kurochkin I.V."/>
            <person name="Lareau L.F."/>
            <person name="Lazarevic D."/>
            <person name="Lipovich L."/>
            <person name="Liu J."/>
            <person name="Liuni S."/>
            <person name="McWilliam S."/>
            <person name="Madan Babu M."/>
            <person name="Madera M."/>
            <person name="Marchionni L."/>
            <person name="Matsuda H."/>
            <person name="Matsuzawa S."/>
            <person name="Miki H."/>
            <person name="Mignone F."/>
            <person name="Miyake S."/>
            <person name="Morris K."/>
            <person name="Mottagui-Tabar S."/>
            <person name="Mulder N."/>
            <person name="Nakano N."/>
            <person name="Nakauchi H."/>
            <person name="Ng P."/>
            <person name="Nilsson R."/>
            <person name="Nishiguchi S."/>
            <person name="Nishikawa S."/>
            <person name="Nori F."/>
            <person name="Ohara O."/>
            <person name="Okazaki Y."/>
            <person name="Orlando V."/>
            <person name="Pang K.C."/>
            <person name="Pavan W.J."/>
            <person name="Pavesi G."/>
            <person name="Pesole G."/>
            <person name="Petrovsky N."/>
            <person name="Piazza S."/>
            <person name="Reed J."/>
            <person name="Reid J.F."/>
            <person name="Ring B.Z."/>
            <person name="Ringwald M."/>
            <person name="Rost B."/>
            <person name="Ruan Y."/>
            <person name="Salzberg S.L."/>
            <person name="Sandelin A."/>
            <person name="Schneider C."/>
            <person name="Schoenbach C."/>
            <person name="Sekiguchi K."/>
            <person name="Semple C.A."/>
            <person name="Seno S."/>
            <person name="Sessa L."/>
            <person name="Sheng Y."/>
            <person name="Shibata Y."/>
            <person name="Shimada H."/>
            <person name="Shimada K."/>
            <person name="Silva D."/>
            <person name="Sinclair B."/>
            <person name="Sperling S."/>
            <person name="Stupka E."/>
            <person name="Sugiura K."/>
            <person name="Sultana R."/>
            <person name="Takenaka Y."/>
            <person name="Taki K."/>
            <person name="Tammoja K."/>
            <person name="Tan S.L."/>
            <person name="Tang S."/>
            <person name="Taylor M.S."/>
            <person name="Tegner J."/>
            <person name="Teichmann S.A."/>
            <person name="Ueda H.R."/>
            <person name="van Nimwegen E."/>
            <person name="Verardo R."/>
            <person name="Wei C.L."/>
            <person name="Yagi K."/>
            <person name="Yamanishi H."/>
            <person name="Zabarovsky E."/>
            <person name="Zhu S."/>
            <person name="Zimmer A."/>
            <person name="Hide W."/>
            <person name="Bult C."/>
            <person name="Grimmond S.M."/>
            <person name="Teasdale R.D."/>
            <person name="Liu E.T."/>
            <person name="Brusic V."/>
            <person name="Quackenbush J."/>
            <person name="Wahlestedt C."/>
            <person name="Mattick J.S."/>
            <person name="Hume D.A."/>
            <person name="Kai C."/>
            <person name="Sasaki D."/>
            <person name="Tomaru Y."/>
            <person name="Fukuda S."/>
            <person name="Kanamori-Katayama M."/>
            <person name="Suzuki M."/>
            <person name="Aoki J."/>
            <person name="Arakawa T."/>
            <person name="Iida J."/>
            <person name="Imamura K."/>
            <person name="Itoh M."/>
            <person name="Kato T."/>
            <person name="Kawaji H."/>
            <person name="Kawagashira N."/>
            <person name="Kawashima T."/>
            <person name="Kojima M."/>
            <person name="Kondo S."/>
            <person name="Konno H."/>
            <person name="Nakano K."/>
            <person name="Ninomiya N."/>
            <person name="Nishio T."/>
            <person name="Okada M."/>
            <person name="Plessy C."/>
            <person name="Shibata K."/>
            <person name="Shiraki T."/>
            <person name="Suzuki S."/>
            <person name="Tagami M."/>
            <person name="Waki K."/>
            <person name="Watahiki A."/>
            <person name="Okamura-Oho Y."/>
            <person name="Suzuki H."/>
            <person name="Kawai J."/>
            <person name="Hayashizaki Y."/>
        </authorList>
    </citation>
    <scope>NUCLEOTIDE SEQUENCE [LARGE SCALE MRNA]</scope>
    <source>
        <strain>C57BL/6J</strain>
        <tissue>Skin</tissue>
        <tissue>Tongue</tissue>
    </source>
</reference>
<reference key="3">
    <citation type="journal article" date="2004" name="Genome Res.">
        <title>The status, quality, and expansion of the NIH full-length cDNA project: the Mammalian Gene Collection (MGC).</title>
        <authorList>
            <consortium name="The MGC Project Team"/>
        </authorList>
    </citation>
    <scope>NUCLEOTIDE SEQUENCE [LARGE SCALE MRNA]</scope>
</reference>
<reference key="4">
    <citation type="journal article" date="2016" name="J. Pathol.">
        <title>Alkaline ceramidase 1 is essential for mammalian skin homeostasis and regulating whole-body energy expenditure.</title>
        <authorList>
            <person name="Liakath-Ali K."/>
            <person name="Vancollie V.E."/>
            <person name="Lelliott C.J."/>
            <person name="Speak A.O."/>
            <person name="Lafont D."/>
            <person name="Protheroe H.J."/>
            <person name="Ingvorsen C."/>
            <person name="Galli A."/>
            <person name="Green A."/>
            <person name="Gleeson D."/>
            <person name="Ryder E."/>
            <person name="Glover L."/>
            <person name="Vizcay-Barrena G."/>
            <person name="Karp N.A."/>
            <person name="Arends M.J."/>
            <person name="Brenn T."/>
            <person name="Spiegel S."/>
            <person name="Adams D.J."/>
            <person name="Watt F.M."/>
            <person name="van der Weyden L."/>
        </authorList>
    </citation>
    <scope>FUNCTION</scope>
    <scope>CATALYTIC ACTIVITY</scope>
    <scope>PATHWAY</scope>
    <scope>TISSUE SPECIFICITY</scope>
    <scope>DISRUPTION PHENOTYPE</scope>
</reference>
<reference key="5">
    <citation type="journal article" date="2017" name="Stem Cell Reports">
        <title>Alkaline Ceramidase 1 Protects Mice from Premature Hair Loss by Maintaining the Homeostasis of Hair Follicle Stem Cells.</title>
        <authorList>
            <person name="Lin C.L."/>
            <person name="Xu R."/>
            <person name="Yi J.K."/>
            <person name="Li F."/>
            <person name="Chen J."/>
            <person name="Jones E.C."/>
            <person name="Slutsky J.B."/>
            <person name="Huang L."/>
            <person name="Rigas B."/>
            <person name="Cao J."/>
            <person name="Zhong X."/>
            <person name="Snider A.J."/>
            <person name="Obeid L.M."/>
            <person name="Hannun Y.A."/>
            <person name="Mao C."/>
        </authorList>
    </citation>
    <scope>FUNCTION</scope>
    <scope>CATALYTIC ACTIVITY</scope>
    <scope>TISSUE SPECIFICITY</scope>
    <scope>DISRUPTION PHENOTYPE</scope>
</reference>
<dbReference type="EC" id="3.5.1.-" evidence="1"/>
<dbReference type="EC" id="3.5.1.23" evidence="4 5 6"/>
<dbReference type="EMBL" id="AF347023">
    <property type="protein sequence ID" value="AAL83821.1"/>
    <property type="molecule type" value="mRNA"/>
</dbReference>
<dbReference type="EMBL" id="AK028901">
    <property type="protein sequence ID" value="BAC26186.1"/>
    <property type="molecule type" value="mRNA"/>
</dbReference>
<dbReference type="EMBL" id="AK075884">
    <property type="protein sequence ID" value="BAC36029.1"/>
    <property type="molecule type" value="mRNA"/>
</dbReference>
<dbReference type="EMBL" id="BC130254">
    <property type="protein sequence ID" value="AAI30255.1"/>
    <property type="molecule type" value="mRNA"/>
</dbReference>
<dbReference type="CCDS" id="CCDS28919.1"/>
<dbReference type="RefSeq" id="NP_783858.1">
    <property type="nucleotide sequence ID" value="NM_175731.4"/>
</dbReference>
<dbReference type="SMR" id="Q8R4X1"/>
<dbReference type="FunCoup" id="Q8R4X1">
    <property type="interactions" value="481"/>
</dbReference>
<dbReference type="STRING" id="10090.ENSMUSP00000062037"/>
<dbReference type="SwissLipids" id="SLP:000000676"/>
<dbReference type="PaxDb" id="10090-ENSMUSP00000062037"/>
<dbReference type="ProteomicsDB" id="285537"/>
<dbReference type="Antibodypedia" id="49939">
    <property type="antibodies" value="144 antibodies from 24 providers"/>
</dbReference>
<dbReference type="DNASU" id="171168"/>
<dbReference type="Ensembl" id="ENSMUST00000056113.5">
    <property type="protein sequence ID" value="ENSMUSP00000062037.5"/>
    <property type="gene ID" value="ENSMUSG00000045019.5"/>
</dbReference>
<dbReference type="GeneID" id="171168"/>
<dbReference type="KEGG" id="mmu:171168"/>
<dbReference type="UCSC" id="uc008ddl.1">
    <property type="organism name" value="mouse"/>
</dbReference>
<dbReference type="AGR" id="MGI:2181962"/>
<dbReference type="CTD" id="125981"/>
<dbReference type="MGI" id="MGI:2181962">
    <property type="gene designation" value="Acer1"/>
</dbReference>
<dbReference type="VEuPathDB" id="HostDB:ENSMUSG00000045019"/>
<dbReference type="eggNOG" id="KOG2329">
    <property type="taxonomic scope" value="Eukaryota"/>
</dbReference>
<dbReference type="GeneTree" id="ENSGT00730000110920"/>
<dbReference type="HOGENOM" id="CLU_088280_1_0_1"/>
<dbReference type="InParanoid" id="Q8R4X1"/>
<dbReference type="OMA" id="NYKHSEH"/>
<dbReference type="OrthoDB" id="187171at2759"/>
<dbReference type="PhylomeDB" id="Q8R4X1"/>
<dbReference type="TreeFam" id="TF313019"/>
<dbReference type="BRENDA" id="3.5.1.23">
    <property type="organism ID" value="3474"/>
</dbReference>
<dbReference type="Reactome" id="R-MMU-9845614">
    <property type="pathway name" value="Sphingolipid catabolism"/>
</dbReference>
<dbReference type="UniPathway" id="UPA00222"/>
<dbReference type="BioGRID-ORCS" id="171168">
    <property type="hits" value="2 hits in 80 CRISPR screens"/>
</dbReference>
<dbReference type="ChiTaRS" id="Acer1">
    <property type="organism name" value="mouse"/>
</dbReference>
<dbReference type="PRO" id="PR:Q8R4X1"/>
<dbReference type="Proteomes" id="UP000000589">
    <property type="component" value="Chromosome 17"/>
</dbReference>
<dbReference type="RNAct" id="Q8R4X1">
    <property type="molecule type" value="protein"/>
</dbReference>
<dbReference type="Bgee" id="ENSMUSG00000045019">
    <property type="expression patterns" value="Expressed in skin of external ear and 35 other cell types or tissues"/>
</dbReference>
<dbReference type="GO" id="GO:0005783">
    <property type="term" value="C:endoplasmic reticulum"/>
    <property type="evidence" value="ECO:0000314"/>
    <property type="project" value="MGI"/>
</dbReference>
<dbReference type="GO" id="GO:0005789">
    <property type="term" value="C:endoplasmic reticulum membrane"/>
    <property type="evidence" value="ECO:0007669"/>
    <property type="project" value="UniProtKB-SubCell"/>
</dbReference>
<dbReference type="GO" id="GO:0046872">
    <property type="term" value="F:metal ion binding"/>
    <property type="evidence" value="ECO:0007669"/>
    <property type="project" value="UniProtKB-KW"/>
</dbReference>
<dbReference type="GO" id="GO:0017040">
    <property type="term" value="F:N-acylsphingosine amidohydrolase activity"/>
    <property type="evidence" value="ECO:0000314"/>
    <property type="project" value="UniProtKB"/>
</dbReference>
<dbReference type="GO" id="GO:0071277">
    <property type="term" value="P:cellular response to calcium ion"/>
    <property type="evidence" value="ECO:0007669"/>
    <property type="project" value="Ensembl"/>
</dbReference>
<dbReference type="GO" id="GO:0046514">
    <property type="term" value="P:ceramide catabolic process"/>
    <property type="evidence" value="ECO:0000314"/>
    <property type="project" value="MGI"/>
</dbReference>
<dbReference type="GO" id="GO:0030216">
    <property type="term" value="P:keratinocyte differentiation"/>
    <property type="evidence" value="ECO:0007669"/>
    <property type="project" value="Ensembl"/>
</dbReference>
<dbReference type="GO" id="GO:0019216">
    <property type="term" value="P:regulation of lipid metabolic process"/>
    <property type="evidence" value="ECO:0000314"/>
    <property type="project" value="MGI"/>
</dbReference>
<dbReference type="GO" id="GO:0010446">
    <property type="term" value="P:response to alkaline pH"/>
    <property type="evidence" value="ECO:0007669"/>
    <property type="project" value="Ensembl"/>
</dbReference>
<dbReference type="GO" id="GO:0048733">
    <property type="term" value="P:sebaceous gland development"/>
    <property type="evidence" value="ECO:0000315"/>
    <property type="project" value="UniProtKB"/>
</dbReference>
<dbReference type="GO" id="GO:0006665">
    <property type="term" value="P:sphingolipid metabolic process"/>
    <property type="evidence" value="ECO:0000314"/>
    <property type="project" value="MGI"/>
</dbReference>
<dbReference type="GO" id="GO:0046512">
    <property type="term" value="P:sphingosine biosynthetic process"/>
    <property type="evidence" value="ECO:0000315"/>
    <property type="project" value="UniProtKB"/>
</dbReference>
<dbReference type="InterPro" id="IPR008901">
    <property type="entry name" value="ACER"/>
</dbReference>
<dbReference type="PANTHER" id="PTHR46139">
    <property type="entry name" value="ALKALINE CERAMIDASE"/>
    <property type="match status" value="1"/>
</dbReference>
<dbReference type="PANTHER" id="PTHR46139:SF2">
    <property type="entry name" value="ALKALINE CERAMIDASE 1"/>
    <property type="match status" value="1"/>
</dbReference>
<dbReference type="Pfam" id="PF05875">
    <property type="entry name" value="Ceramidase"/>
    <property type="match status" value="1"/>
</dbReference>